<protein>
    <recommendedName>
        <fullName>Shiga toxin subunit A</fullName>
        <ecNumber>3.2.2.22</ecNumber>
    </recommendedName>
</protein>
<dbReference type="EC" id="3.2.2.22"/>
<dbReference type="EMBL" id="AJ132761">
    <property type="protein sequence ID" value="CAA10763.1"/>
    <property type="molecule type" value="Genomic_DNA"/>
</dbReference>
<dbReference type="EMBL" id="AJ279086">
    <property type="protein sequence ID" value="CAC12887.1"/>
    <property type="molecule type" value="Genomic_DNA"/>
</dbReference>
<dbReference type="SMR" id="Q779K4"/>
<dbReference type="GO" id="GO:0030598">
    <property type="term" value="F:rRNA N-glycosylase activity"/>
    <property type="evidence" value="ECO:0007669"/>
    <property type="project" value="UniProtKB-EC"/>
</dbReference>
<dbReference type="GO" id="GO:0090729">
    <property type="term" value="F:toxin activity"/>
    <property type="evidence" value="ECO:0007669"/>
    <property type="project" value="UniProtKB-KW"/>
</dbReference>
<dbReference type="GO" id="GO:0017148">
    <property type="term" value="P:negative regulation of translation"/>
    <property type="evidence" value="ECO:0007669"/>
    <property type="project" value="UniProtKB-KW"/>
</dbReference>
<dbReference type="GO" id="GO:0098676">
    <property type="term" value="P:symbiont-mediated modulation of host virulence"/>
    <property type="evidence" value="ECO:0007669"/>
    <property type="project" value="UniProtKB-KW"/>
</dbReference>
<dbReference type="Gene3D" id="3.40.420.10">
    <property type="entry name" value="Ricin (A subunit), domain 1"/>
    <property type="match status" value="1"/>
</dbReference>
<dbReference type="Gene3D" id="4.10.470.10">
    <property type="entry name" value="Ricin (A Subunit), domain 2"/>
    <property type="match status" value="1"/>
</dbReference>
<dbReference type="InterPro" id="IPR036041">
    <property type="entry name" value="Ribosome-inact_prot_sf"/>
</dbReference>
<dbReference type="InterPro" id="IPR001574">
    <property type="entry name" value="Ribosome_inactivat_prot"/>
</dbReference>
<dbReference type="InterPro" id="IPR017988">
    <property type="entry name" value="Ribosome_inactivat_prot_CS"/>
</dbReference>
<dbReference type="InterPro" id="IPR016138">
    <property type="entry name" value="Ribosome_inactivat_prot_sub1"/>
</dbReference>
<dbReference type="InterPro" id="IPR016139">
    <property type="entry name" value="Ribosome_inactivat_prot_sub2"/>
</dbReference>
<dbReference type="InterPro" id="IPR016331">
    <property type="entry name" value="Shiga-like_toxin_subunit_A"/>
</dbReference>
<dbReference type="NCBIfam" id="NF041694">
    <property type="entry name" value="Shig_StxA_1a"/>
    <property type="match status" value="1"/>
</dbReference>
<dbReference type="NCBIfam" id="NF033658">
    <property type="entry name" value="Shiga_Stx1A"/>
    <property type="match status" value="1"/>
</dbReference>
<dbReference type="PANTHER" id="PTHR33453">
    <property type="match status" value="1"/>
</dbReference>
<dbReference type="PANTHER" id="PTHR33453:SF34">
    <property type="entry name" value="RIBOSOME-INACTIVATING PROTEIN"/>
    <property type="match status" value="1"/>
</dbReference>
<dbReference type="Pfam" id="PF00161">
    <property type="entry name" value="RIP"/>
    <property type="match status" value="1"/>
</dbReference>
<dbReference type="PIRSF" id="PIRSF001924">
    <property type="entry name" value="Shigella_toxin_subunit_A"/>
    <property type="match status" value="1"/>
</dbReference>
<dbReference type="SUPFAM" id="SSF56371">
    <property type="entry name" value="Ribosome inactivating proteins (RIP)"/>
    <property type="match status" value="1"/>
</dbReference>
<dbReference type="PROSITE" id="PS00275">
    <property type="entry name" value="SHIGA_RICIN"/>
    <property type="match status" value="1"/>
</dbReference>
<gene>
    <name type="primary">stxA</name>
</gene>
<name>STXA_BP788</name>
<feature type="signal peptide" evidence="2">
    <location>
        <begin position="1"/>
        <end position="22"/>
    </location>
</feature>
<feature type="chain" id="PRO_0000312304" description="Shiga toxin subunit A">
    <location>
        <begin position="23"/>
        <end position="315"/>
    </location>
</feature>
<feature type="region of interest" description="A1">
    <location>
        <begin position="23"/>
        <end position="273"/>
    </location>
</feature>
<feature type="region of interest" description="A2">
    <location>
        <begin position="274"/>
        <end position="315"/>
    </location>
</feature>
<feature type="active site" evidence="1">
    <location>
        <position position="189"/>
    </location>
</feature>
<feature type="site" description="Cleavage; by furin" evidence="1">
    <location>
        <begin position="273"/>
        <end position="274"/>
    </location>
</feature>
<feature type="disulfide bond" evidence="1">
    <location>
        <begin position="264"/>
        <end position="283"/>
    </location>
</feature>
<keyword id="KW-1015">Disulfide bond</keyword>
<keyword id="KW-0378">Hydrolase</keyword>
<keyword id="KW-1254">Modulation of host virulence by virus</keyword>
<keyword id="KW-0652">Protein synthesis inhibitor</keyword>
<keyword id="KW-0732">Signal</keyword>
<keyword id="KW-0800">Toxin</keyword>
<keyword id="KW-1255">Viral exotoxin</keyword>
<keyword id="KW-0843">Virulence</keyword>
<reference key="1">
    <citation type="journal article" date="1999" name="Lancet">
        <title>Isolation of Shigella sonnei lysogenic for a bacteriophage encoding gene for production of Shiga toxin.</title>
        <authorList>
            <person name="Beutin L."/>
            <person name="Strauch E."/>
            <person name="Fischer I."/>
        </authorList>
    </citation>
    <scope>NUCLEOTIDE SEQUENCE [GENOMIC DNA]</scope>
</reference>
<reference key="2">
    <citation type="journal article" date="2001" name="Infect. Immun.">
        <title>Characterization of a Shiga toxin-encoding temperate bacteriophage of Shigella sonnei.</title>
        <authorList>
            <person name="Strauch E."/>
            <person name="Lurz R."/>
            <person name="Beutin L."/>
        </authorList>
    </citation>
    <scope>NUCLEOTIDE SEQUENCE [GENOMIC DNA]</scope>
</reference>
<organismHost>
    <name type="scientific">Shigella sonnei</name>
    <dbReference type="NCBI Taxonomy" id="624"/>
</organismHost>
<evidence type="ECO:0000250" key="1"/>
<evidence type="ECO:0000255" key="2"/>
<evidence type="ECO:0000305" key="3"/>
<accession>Q779K4</accession>
<accession>Q7B2T8</accession>
<sequence>MKIIIFRVLTFFFVIFSVNVVAKEFTLDFSTAKTYVDSLNVIRSAIGTPLQTISSGGTSLLMIDSGTGDNLFAVDVRGIDPEEGRFNNLRLIVERNNLYVTGFVNRTNNVFYRFADFSHVTFPGTTAVTLSGDSSYTTLQRVAGISRTGMQINRHSLTTSYLDLMSHSGTSLTQSVARAMLRFVTVTAEALRFRQIQRGFRTTLDDLSGRSYVMTAEDVDLTLNWGRLSSVLPDYHGQDSVRVGRISFGSINAILGSVALILNCHHHASRVARMASDEFPSMCPADGRVRGITHNKILWDSSTLGAILMRRTISS</sequence>
<proteinExistence type="inferred from homology"/>
<organism>
    <name type="scientific">Shigella phage 7888</name>
    <name type="common">Shigella sonnei bacteriophage 7888</name>
    <dbReference type="NCBI Taxonomy" id="138946"/>
    <lineage>
        <taxon>Viruses</taxon>
        <taxon>Duplodnaviria</taxon>
        <taxon>Heunggongvirae</taxon>
        <taxon>Uroviricota</taxon>
        <taxon>Caudoviricetes</taxon>
        <taxon>Sepvirinae</taxon>
        <taxon>Traversvirus</taxon>
    </lineage>
</organism>
<comment type="function">
    <text evidence="1">The A subunit is responsible for inhibiting protein synthesis through the catalytic inactivation of 60S ribosomal subunits. After endocytosis, the A subunit is cleaved by furin in two fragments, A1 and A2: A1 is the catalytically active fragment, and A2 is essential for holotoxin assembly with the B subunits (By similarity).</text>
</comment>
<comment type="catalytic activity">
    <reaction>
        <text>Endohydrolysis of the N-glycosidic bond at one specific adenosine on the 28S rRNA.</text>
        <dbReference type="EC" id="3.2.2.22"/>
    </reaction>
</comment>
<comment type="subunit">
    <text evidence="1">Shiga toxin contains a single subunit A and five copies of subunit B.</text>
</comment>
<comment type="similarity">
    <text evidence="3">Belongs to the ribosome-inactivating protein family.</text>
</comment>